<evidence type="ECO:0000255" key="1">
    <source>
        <dbReference type="HAMAP-Rule" id="MF_00048"/>
    </source>
</evidence>
<feature type="chain" id="PRO_1000074808" description="UPF0102 protein CKL_1410">
    <location>
        <begin position="1"/>
        <end position="122"/>
    </location>
</feature>
<keyword id="KW-1185">Reference proteome</keyword>
<proteinExistence type="inferred from homology"/>
<name>Y1410_CLOK5</name>
<sequence>MHSFNKDIGSLGEDIAKNYLNQIGYTVLERNFRCKVGEIDIIGKDGDYICFIEVKSRYGKLYGNPCESVNYPKRLKIYKAANIYMLRKKLFKFNFRFDVIEIIFNTYNDVPSIKLIKDAFQI</sequence>
<dbReference type="EMBL" id="CP000673">
    <property type="protein sequence ID" value="EDK33452.1"/>
    <property type="molecule type" value="Genomic_DNA"/>
</dbReference>
<dbReference type="RefSeq" id="WP_012101799.1">
    <property type="nucleotide sequence ID" value="NC_009706.1"/>
</dbReference>
<dbReference type="SMR" id="A5N821"/>
<dbReference type="STRING" id="431943.CKL_1410"/>
<dbReference type="KEGG" id="ckl:CKL_1410"/>
<dbReference type="eggNOG" id="COG0792">
    <property type="taxonomic scope" value="Bacteria"/>
</dbReference>
<dbReference type="HOGENOM" id="CLU_115353_2_1_9"/>
<dbReference type="Proteomes" id="UP000002411">
    <property type="component" value="Chromosome"/>
</dbReference>
<dbReference type="GO" id="GO:0003676">
    <property type="term" value="F:nucleic acid binding"/>
    <property type="evidence" value="ECO:0007669"/>
    <property type="project" value="InterPro"/>
</dbReference>
<dbReference type="CDD" id="cd20736">
    <property type="entry name" value="PoNe_Nuclease"/>
    <property type="match status" value="1"/>
</dbReference>
<dbReference type="Gene3D" id="3.40.1350.10">
    <property type="match status" value="1"/>
</dbReference>
<dbReference type="HAMAP" id="MF_00048">
    <property type="entry name" value="UPF0102"/>
    <property type="match status" value="1"/>
</dbReference>
<dbReference type="InterPro" id="IPR011335">
    <property type="entry name" value="Restrct_endonuc-II-like"/>
</dbReference>
<dbReference type="InterPro" id="IPR011856">
    <property type="entry name" value="tRNA_endonuc-like_dom_sf"/>
</dbReference>
<dbReference type="InterPro" id="IPR003509">
    <property type="entry name" value="UPF0102_YraN-like"/>
</dbReference>
<dbReference type="NCBIfam" id="NF009150">
    <property type="entry name" value="PRK12497.1-3"/>
    <property type="match status" value="1"/>
</dbReference>
<dbReference type="NCBIfam" id="TIGR00252">
    <property type="entry name" value="YraN family protein"/>
    <property type="match status" value="1"/>
</dbReference>
<dbReference type="PANTHER" id="PTHR34039">
    <property type="entry name" value="UPF0102 PROTEIN YRAN"/>
    <property type="match status" value="1"/>
</dbReference>
<dbReference type="PANTHER" id="PTHR34039:SF1">
    <property type="entry name" value="UPF0102 PROTEIN YRAN"/>
    <property type="match status" value="1"/>
</dbReference>
<dbReference type="Pfam" id="PF02021">
    <property type="entry name" value="UPF0102"/>
    <property type="match status" value="1"/>
</dbReference>
<dbReference type="SUPFAM" id="SSF52980">
    <property type="entry name" value="Restriction endonuclease-like"/>
    <property type="match status" value="1"/>
</dbReference>
<comment type="similarity">
    <text evidence="1">Belongs to the UPF0102 family.</text>
</comment>
<gene>
    <name type="ordered locus">CKL_1410</name>
</gene>
<organism>
    <name type="scientific">Clostridium kluyveri (strain ATCC 8527 / DSM 555 / NBRC 12016 / NCIMB 10680 / K1)</name>
    <dbReference type="NCBI Taxonomy" id="431943"/>
    <lineage>
        <taxon>Bacteria</taxon>
        <taxon>Bacillati</taxon>
        <taxon>Bacillota</taxon>
        <taxon>Clostridia</taxon>
        <taxon>Eubacteriales</taxon>
        <taxon>Clostridiaceae</taxon>
        <taxon>Clostridium</taxon>
    </lineage>
</organism>
<protein>
    <recommendedName>
        <fullName evidence="1">UPF0102 protein CKL_1410</fullName>
    </recommendedName>
</protein>
<reference key="1">
    <citation type="journal article" date="2008" name="Proc. Natl. Acad. Sci. U.S.A.">
        <title>The genome of Clostridium kluyveri, a strict anaerobe with unique metabolic features.</title>
        <authorList>
            <person name="Seedorf H."/>
            <person name="Fricke W.F."/>
            <person name="Veith B."/>
            <person name="Brueggemann H."/>
            <person name="Liesegang H."/>
            <person name="Strittmatter A."/>
            <person name="Miethke M."/>
            <person name="Buckel W."/>
            <person name="Hinderberger J."/>
            <person name="Li F."/>
            <person name="Hagemeier C."/>
            <person name="Thauer R.K."/>
            <person name="Gottschalk G."/>
        </authorList>
    </citation>
    <scope>NUCLEOTIDE SEQUENCE [LARGE SCALE GENOMIC DNA]</scope>
    <source>
        <strain>ATCC 8527 / DSM 555 / NBRC 12016 / NCIMB 10680 / K1</strain>
    </source>
</reference>
<accession>A5N821</accession>